<evidence type="ECO:0000255" key="1">
    <source>
        <dbReference type="HAMAP-Rule" id="MF_00185"/>
    </source>
</evidence>
<feature type="chain" id="PRO_0000163989" description="tRNA dimethylallyltransferase">
    <location>
        <begin position="1"/>
        <end position="299"/>
    </location>
</feature>
<feature type="region of interest" description="Interaction with substrate tRNA" evidence="1">
    <location>
        <begin position="36"/>
        <end position="39"/>
    </location>
</feature>
<feature type="binding site" evidence="1">
    <location>
        <begin position="11"/>
        <end position="18"/>
    </location>
    <ligand>
        <name>ATP</name>
        <dbReference type="ChEBI" id="CHEBI:30616"/>
    </ligand>
</feature>
<feature type="binding site" evidence="1">
    <location>
        <begin position="13"/>
        <end position="18"/>
    </location>
    <ligand>
        <name>substrate</name>
    </ligand>
</feature>
<feature type="site" description="Interaction with substrate tRNA" evidence="1">
    <location>
        <position position="102"/>
    </location>
</feature>
<organism>
    <name type="scientific">Streptococcus pyogenes serotype M6 (strain ATCC BAA-946 / MGAS10394)</name>
    <dbReference type="NCBI Taxonomy" id="286636"/>
    <lineage>
        <taxon>Bacteria</taxon>
        <taxon>Bacillati</taxon>
        <taxon>Bacillota</taxon>
        <taxon>Bacilli</taxon>
        <taxon>Lactobacillales</taxon>
        <taxon>Streptococcaceae</taxon>
        <taxon>Streptococcus</taxon>
    </lineage>
</organism>
<comment type="function">
    <text evidence="1">Catalyzes the transfer of a dimethylallyl group onto the adenine at position 37 in tRNAs that read codons beginning with uridine, leading to the formation of N6-(dimethylallyl)adenosine (i(6)A).</text>
</comment>
<comment type="catalytic activity">
    <reaction evidence="1">
        <text>adenosine(37) in tRNA + dimethylallyl diphosphate = N(6)-dimethylallyladenosine(37) in tRNA + diphosphate</text>
        <dbReference type="Rhea" id="RHEA:26482"/>
        <dbReference type="Rhea" id="RHEA-COMP:10162"/>
        <dbReference type="Rhea" id="RHEA-COMP:10375"/>
        <dbReference type="ChEBI" id="CHEBI:33019"/>
        <dbReference type="ChEBI" id="CHEBI:57623"/>
        <dbReference type="ChEBI" id="CHEBI:74411"/>
        <dbReference type="ChEBI" id="CHEBI:74415"/>
        <dbReference type="EC" id="2.5.1.75"/>
    </reaction>
</comment>
<comment type="cofactor">
    <cofactor evidence="1">
        <name>Mg(2+)</name>
        <dbReference type="ChEBI" id="CHEBI:18420"/>
    </cofactor>
</comment>
<comment type="subunit">
    <text evidence="1">Monomer.</text>
</comment>
<comment type="similarity">
    <text evidence="1">Belongs to the IPP transferase family.</text>
</comment>
<protein>
    <recommendedName>
        <fullName evidence="1">tRNA dimethylallyltransferase</fullName>
        <ecNumber evidence="1">2.5.1.75</ecNumber>
    </recommendedName>
    <alternativeName>
        <fullName evidence="1">Dimethylallyl diphosphate:tRNA dimethylallyltransferase</fullName>
        <shortName evidence="1">DMAPP:tRNA dimethylallyltransferase</shortName>
        <shortName evidence="1">DMATase</shortName>
    </alternativeName>
    <alternativeName>
        <fullName evidence="1">Isopentenyl-diphosphate:tRNA isopentenyltransferase</fullName>
        <shortName evidence="1">IPP transferase</shortName>
        <shortName evidence="1">IPPT</shortName>
        <shortName evidence="1">IPTase</shortName>
    </alternativeName>
</protein>
<dbReference type="EC" id="2.5.1.75" evidence="1"/>
<dbReference type="EMBL" id="CP000003">
    <property type="protein sequence ID" value="AAT86883.1"/>
    <property type="molecule type" value="Genomic_DNA"/>
</dbReference>
<dbReference type="RefSeq" id="WP_011184442.1">
    <property type="nucleotide sequence ID" value="NC_006086.1"/>
</dbReference>
<dbReference type="SMR" id="Q5XCI0"/>
<dbReference type="KEGG" id="spa:M6_Spy0748"/>
<dbReference type="HOGENOM" id="CLU_032616_0_1_9"/>
<dbReference type="Proteomes" id="UP000001167">
    <property type="component" value="Chromosome"/>
</dbReference>
<dbReference type="GO" id="GO:0005524">
    <property type="term" value="F:ATP binding"/>
    <property type="evidence" value="ECO:0007669"/>
    <property type="project" value="UniProtKB-UniRule"/>
</dbReference>
<dbReference type="GO" id="GO:0052381">
    <property type="term" value="F:tRNA dimethylallyltransferase activity"/>
    <property type="evidence" value="ECO:0007669"/>
    <property type="project" value="UniProtKB-UniRule"/>
</dbReference>
<dbReference type="GO" id="GO:0006400">
    <property type="term" value="P:tRNA modification"/>
    <property type="evidence" value="ECO:0007669"/>
    <property type="project" value="TreeGrafter"/>
</dbReference>
<dbReference type="Gene3D" id="3.40.50.300">
    <property type="entry name" value="P-loop containing nucleotide triphosphate hydrolases"/>
    <property type="match status" value="1"/>
</dbReference>
<dbReference type="HAMAP" id="MF_00185">
    <property type="entry name" value="IPP_trans"/>
    <property type="match status" value="1"/>
</dbReference>
<dbReference type="InterPro" id="IPR039657">
    <property type="entry name" value="Dimethylallyltransferase"/>
</dbReference>
<dbReference type="InterPro" id="IPR018022">
    <property type="entry name" value="IPT"/>
</dbReference>
<dbReference type="InterPro" id="IPR027417">
    <property type="entry name" value="P-loop_NTPase"/>
</dbReference>
<dbReference type="NCBIfam" id="TIGR00174">
    <property type="entry name" value="miaA"/>
    <property type="match status" value="1"/>
</dbReference>
<dbReference type="PANTHER" id="PTHR11088">
    <property type="entry name" value="TRNA DIMETHYLALLYLTRANSFERASE"/>
    <property type="match status" value="1"/>
</dbReference>
<dbReference type="PANTHER" id="PTHR11088:SF60">
    <property type="entry name" value="TRNA DIMETHYLALLYLTRANSFERASE"/>
    <property type="match status" value="1"/>
</dbReference>
<dbReference type="Pfam" id="PF01715">
    <property type="entry name" value="IPPT"/>
    <property type="match status" value="1"/>
</dbReference>
<dbReference type="SUPFAM" id="SSF52540">
    <property type="entry name" value="P-loop containing nucleoside triphosphate hydrolases"/>
    <property type="match status" value="1"/>
</dbReference>
<accession>Q5XCI0</accession>
<gene>
    <name evidence="1" type="primary">miaA</name>
    <name type="ordered locus">M6_Spy0748</name>
</gene>
<name>MIAA_STRP6</name>
<reference key="1">
    <citation type="journal article" date="2004" name="J. Infect. Dis.">
        <title>Progress toward characterization of the group A Streptococcus metagenome: complete genome sequence of a macrolide-resistant serotype M6 strain.</title>
        <authorList>
            <person name="Banks D.J."/>
            <person name="Porcella S.F."/>
            <person name="Barbian K.D."/>
            <person name="Beres S.B."/>
            <person name="Philips L.E."/>
            <person name="Voyich J.M."/>
            <person name="DeLeo F.R."/>
            <person name="Martin J.M."/>
            <person name="Somerville G.A."/>
            <person name="Musser J.M."/>
        </authorList>
    </citation>
    <scope>NUCLEOTIDE SEQUENCE [LARGE SCALE GENOMIC DNA]</scope>
    <source>
        <strain>ATCC BAA-946 / MGAS10394</strain>
    </source>
</reference>
<keyword id="KW-0067">ATP-binding</keyword>
<keyword id="KW-0460">Magnesium</keyword>
<keyword id="KW-0547">Nucleotide-binding</keyword>
<keyword id="KW-0808">Transferase</keyword>
<keyword id="KW-0819">tRNA processing</keyword>
<sequence>MTKIKIVVIVGPTAVGKTALGISLAKALNGEIISGDSQQVYRQLDVGTAKATQEEQEAAVHHLIDIREVTESYSAYEFVQDAQKAISDIVSRGKLPIIVGGTGLYLQSLLEGYHLGGQVDQEAVKAYRQELDQLSDQEVYELLQVKSITIKQLNRRRAIRALELSQFADDLENAETAYEPLIIGLNDDRQVIYDRINQRVDRMLENGLLEEAKWLYEHYPTVQASRGIGYKELFPYFVGEMTLAEASDQLKQNTRRFAKRQLTWFRNRMAVNFTAITAPDYPQVVHDRVRDFLGQKEKS</sequence>
<proteinExistence type="inferred from homology"/>